<sequence>MTRKIVDLARSCGILYLMLFIGEWIAHHLNIGIPASIWGLLLLFLGLTFRIIKLDWVLCSASLLIRYMALLFVPVSVGVIKYADVLFSQMNVLLLPNIVSTFLTLIVVGLLSDYLFSLSSFSHLRKKVARKQAEKA</sequence>
<proteinExistence type="inferred from homology"/>
<organism>
    <name type="scientific">Pasteurella multocida (strain Pm70)</name>
    <dbReference type="NCBI Taxonomy" id="272843"/>
    <lineage>
        <taxon>Bacteria</taxon>
        <taxon>Pseudomonadati</taxon>
        <taxon>Pseudomonadota</taxon>
        <taxon>Gammaproteobacteria</taxon>
        <taxon>Pasteurellales</taxon>
        <taxon>Pasteurellaceae</taxon>
        <taxon>Pasteurella</taxon>
    </lineage>
</organism>
<evidence type="ECO:0000255" key="1">
    <source>
        <dbReference type="HAMAP-Rule" id="MF_01144"/>
    </source>
</evidence>
<evidence type="ECO:0000305" key="2"/>
<reference key="1">
    <citation type="journal article" date="2001" name="Proc. Natl. Acad. Sci. U.S.A.">
        <title>Complete genomic sequence of Pasteurella multocida Pm70.</title>
        <authorList>
            <person name="May B.J."/>
            <person name="Zhang Q."/>
            <person name="Li L.L."/>
            <person name="Paustian M.L."/>
            <person name="Whittam T.S."/>
            <person name="Kapur V."/>
        </authorList>
    </citation>
    <scope>NUCLEOTIDE SEQUENCE [LARGE SCALE GENOMIC DNA]</scope>
    <source>
        <strain>Pm70</strain>
    </source>
</reference>
<accession>Q9CME9</accession>
<protein>
    <recommendedName>
        <fullName evidence="1">UPF0299 membrane protein PM0880</fullName>
    </recommendedName>
</protein>
<keyword id="KW-0997">Cell inner membrane</keyword>
<keyword id="KW-1003">Cell membrane</keyword>
<keyword id="KW-0472">Membrane</keyword>
<keyword id="KW-1185">Reference proteome</keyword>
<keyword id="KW-0812">Transmembrane</keyword>
<keyword id="KW-1133">Transmembrane helix</keyword>
<feature type="chain" id="PRO_0000072810" description="UPF0299 membrane protein PM0880">
    <location>
        <begin position="1"/>
        <end position="136"/>
    </location>
</feature>
<feature type="transmembrane region" description="Helical" evidence="1">
    <location>
        <begin position="5"/>
        <end position="25"/>
    </location>
</feature>
<feature type="transmembrane region" description="Helical" evidence="1">
    <location>
        <begin position="29"/>
        <end position="49"/>
    </location>
</feature>
<feature type="transmembrane region" description="Helical" evidence="1">
    <location>
        <begin position="67"/>
        <end position="87"/>
    </location>
</feature>
<feature type="transmembrane region" description="Helical" evidence="1">
    <location>
        <begin position="92"/>
        <end position="112"/>
    </location>
</feature>
<comment type="subcellular location">
    <subcellularLocation>
        <location evidence="1">Cell inner membrane</location>
        <topology evidence="1">Multi-pass membrane protein</topology>
    </subcellularLocation>
</comment>
<comment type="similarity">
    <text evidence="1">Belongs to the UPF0299 family.</text>
</comment>
<comment type="sequence caution" evidence="2">
    <conflict type="erroneous initiation">
        <sequence resource="EMBL-CDS" id="AAK02964"/>
    </conflict>
</comment>
<name>Y880_PASMU</name>
<dbReference type="EMBL" id="AE004439">
    <property type="protein sequence ID" value="AAK02964.1"/>
    <property type="status" value="ALT_INIT"/>
    <property type="molecule type" value="Genomic_DNA"/>
</dbReference>
<dbReference type="RefSeq" id="WP_005722694.1">
    <property type="nucleotide sequence ID" value="NC_002663.1"/>
</dbReference>
<dbReference type="SMR" id="Q9CME9"/>
<dbReference type="STRING" id="272843.PM0880"/>
<dbReference type="EnsemblBacteria" id="AAK02964">
    <property type="protein sequence ID" value="AAK02964"/>
    <property type="gene ID" value="PM0880"/>
</dbReference>
<dbReference type="KEGG" id="pmu:PM0880"/>
<dbReference type="HOGENOM" id="CLU_113736_1_1_6"/>
<dbReference type="OrthoDB" id="385012at2"/>
<dbReference type="Proteomes" id="UP000000809">
    <property type="component" value="Chromosome"/>
</dbReference>
<dbReference type="GO" id="GO:0005886">
    <property type="term" value="C:plasma membrane"/>
    <property type="evidence" value="ECO:0007669"/>
    <property type="project" value="UniProtKB-SubCell"/>
</dbReference>
<dbReference type="HAMAP" id="MF_01144">
    <property type="entry name" value="UPF0299"/>
    <property type="match status" value="1"/>
</dbReference>
<dbReference type="InterPro" id="IPR005538">
    <property type="entry name" value="LrgA/CidA"/>
</dbReference>
<dbReference type="InterPro" id="IPR022957">
    <property type="entry name" value="Uncharacterised_UPF0299"/>
</dbReference>
<dbReference type="NCBIfam" id="NF002494">
    <property type="entry name" value="PRK01821.1"/>
    <property type="match status" value="1"/>
</dbReference>
<dbReference type="PANTHER" id="PTHR33931">
    <property type="entry name" value="HOLIN-LIKE PROTEIN CIDA-RELATED"/>
    <property type="match status" value="1"/>
</dbReference>
<dbReference type="PANTHER" id="PTHR33931:SF5">
    <property type="entry name" value="UPF0299 MEMBRANE PROTEIN YOHJ"/>
    <property type="match status" value="1"/>
</dbReference>
<dbReference type="Pfam" id="PF03788">
    <property type="entry name" value="LrgA"/>
    <property type="match status" value="1"/>
</dbReference>
<gene>
    <name type="ordered locus">PM0880</name>
</gene>